<sequence length="130" mass="14589">MATEQYYGTGRRKNSVARVFLRAGSGKMTVNGRDVTEYFARETDLMVINQPLEATENADKFDVTITVTGGGTTGQAGAVRHGISRALVVFNEDNRSTLRQRGLLTRDARKVERKKVGLRKARRRPQFSKR</sequence>
<name>RS9_HYDCU</name>
<dbReference type="EMBL" id="CP000109">
    <property type="protein sequence ID" value="ABB41058.1"/>
    <property type="molecule type" value="Genomic_DNA"/>
</dbReference>
<dbReference type="SMR" id="Q31IG5"/>
<dbReference type="STRING" id="317025.Tcr_0462"/>
<dbReference type="KEGG" id="tcx:Tcr_0462"/>
<dbReference type="eggNOG" id="COG0103">
    <property type="taxonomic scope" value="Bacteria"/>
</dbReference>
<dbReference type="HOGENOM" id="CLU_046483_2_1_6"/>
<dbReference type="OrthoDB" id="9803965at2"/>
<dbReference type="GO" id="GO:0022627">
    <property type="term" value="C:cytosolic small ribosomal subunit"/>
    <property type="evidence" value="ECO:0007669"/>
    <property type="project" value="TreeGrafter"/>
</dbReference>
<dbReference type="GO" id="GO:0003723">
    <property type="term" value="F:RNA binding"/>
    <property type="evidence" value="ECO:0007669"/>
    <property type="project" value="TreeGrafter"/>
</dbReference>
<dbReference type="GO" id="GO:0003735">
    <property type="term" value="F:structural constituent of ribosome"/>
    <property type="evidence" value="ECO:0007669"/>
    <property type="project" value="InterPro"/>
</dbReference>
<dbReference type="GO" id="GO:0006412">
    <property type="term" value="P:translation"/>
    <property type="evidence" value="ECO:0007669"/>
    <property type="project" value="UniProtKB-UniRule"/>
</dbReference>
<dbReference type="FunFam" id="3.30.230.10:FF:000001">
    <property type="entry name" value="30S ribosomal protein S9"/>
    <property type="match status" value="1"/>
</dbReference>
<dbReference type="Gene3D" id="3.30.230.10">
    <property type="match status" value="1"/>
</dbReference>
<dbReference type="HAMAP" id="MF_00532_B">
    <property type="entry name" value="Ribosomal_uS9_B"/>
    <property type="match status" value="1"/>
</dbReference>
<dbReference type="InterPro" id="IPR020568">
    <property type="entry name" value="Ribosomal_Su5_D2-typ_SF"/>
</dbReference>
<dbReference type="InterPro" id="IPR000754">
    <property type="entry name" value="Ribosomal_uS9"/>
</dbReference>
<dbReference type="InterPro" id="IPR023035">
    <property type="entry name" value="Ribosomal_uS9_bac/plastid"/>
</dbReference>
<dbReference type="InterPro" id="IPR020574">
    <property type="entry name" value="Ribosomal_uS9_CS"/>
</dbReference>
<dbReference type="InterPro" id="IPR014721">
    <property type="entry name" value="Ribsml_uS5_D2-typ_fold_subgr"/>
</dbReference>
<dbReference type="NCBIfam" id="NF001099">
    <property type="entry name" value="PRK00132.1"/>
    <property type="match status" value="1"/>
</dbReference>
<dbReference type="PANTHER" id="PTHR21569">
    <property type="entry name" value="RIBOSOMAL PROTEIN S9"/>
    <property type="match status" value="1"/>
</dbReference>
<dbReference type="PANTHER" id="PTHR21569:SF1">
    <property type="entry name" value="SMALL RIBOSOMAL SUBUNIT PROTEIN US9M"/>
    <property type="match status" value="1"/>
</dbReference>
<dbReference type="Pfam" id="PF00380">
    <property type="entry name" value="Ribosomal_S9"/>
    <property type="match status" value="1"/>
</dbReference>
<dbReference type="SUPFAM" id="SSF54211">
    <property type="entry name" value="Ribosomal protein S5 domain 2-like"/>
    <property type="match status" value="1"/>
</dbReference>
<dbReference type="PROSITE" id="PS00360">
    <property type="entry name" value="RIBOSOMAL_S9"/>
    <property type="match status" value="1"/>
</dbReference>
<organism>
    <name type="scientific">Hydrogenovibrio crunogenus (strain DSM 25203 / XCL-2)</name>
    <name type="common">Thiomicrospira crunogena</name>
    <dbReference type="NCBI Taxonomy" id="317025"/>
    <lineage>
        <taxon>Bacteria</taxon>
        <taxon>Pseudomonadati</taxon>
        <taxon>Pseudomonadota</taxon>
        <taxon>Gammaproteobacteria</taxon>
        <taxon>Thiotrichales</taxon>
        <taxon>Piscirickettsiaceae</taxon>
        <taxon>Hydrogenovibrio</taxon>
    </lineage>
</organism>
<keyword id="KW-0687">Ribonucleoprotein</keyword>
<keyword id="KW-0689">Ribosomal protein</keyword>
<comment type="similarity">
    <text evidence="1">Belongs to the universal ribosomal protein uS9 family.</text>
</comment>
<proteinExistence type="inferred from homology"/>
<evidence type="ECO:0000255" key="1">
    <source>
        <dbReference type="HAMAP-Rule" id="MF_00532"/>
    </source>
</evidence>
<evidence type="ECO:0000305" key="2"/>
<feature type="chain" id="PRO_1000051359" description="Small ribosomal subunit protein uS9">
    <location>
        <begin position="1"/>
        <end position="130"/>
    </location>
</feature>
<protein>
    <recommendedName>
        <fullName evidence="1">Small ribosomal subunit protein uS9</fullName>
    </recommendedName>
    <alternativeName>
        <fullName evidence="2">30S ribosomal protein S9</fullName>
    </alternativeName>
</protein>
<accession>Q31IG5</accession>
<reference key="1">
    <citation type="journal article" date="2006" name="PLoS Biol.">
        <title>The genome of deep-sea vent chemolithoautotroph Thiomicrospira crunogena XCL-2.</title>
        <authorList>
            <person name="Scott K.M."/>
            <person name="Sievert S.M."/>
            <person name="Abril F.N."/>
            <person name="Ball L.A."/>
            <person name="Barrett C.J."/>
            <person name="Blake R.A."/>
            <person name="Boller A.J."/>
            <person name="Chain P.S.G."/>
            <person name="Clark J.A."/>
            <person name="Davis C.R."/>
            <person name="Detter C."/>
            <person name="Do K.F."/>
            <person name="Dobrinski K.P."/>
            <person name="Faza B.I."/>
            <person name="Fitzpatrick K.A."/>
            <person name="Freyermuth S.K."/>
            <person name="Harmer T.L."/>
            <person name="Hauser L.J."/>
            <person name="Huegler M."/>
            <person name="Kerfeld C.A."/>
            <person name="Klotz M.G."/>
            <person name="Kong W.W."/>
            <person name="Land M."/>
            <person name="Lapidus A."/>
            <person name="Larimer F.W."/>
            <person name="Longo D.L."/>
            <person name="Lucas S."/>
            <person name="Malfatti S.A."/>
            <person name="Massey S.E."/>
            <person name="Martin D.D."/>
            <person name="McCuddin Z."/>
            <person name="Meyer F."/>
            <person name="Moore J.L."/>
            <person name="Ocampo L.H. Jr."/>
            <person name="Paul J.H."/>
            <person name="Paulsen I.T."/>
            <person name="Reep D.K."/>
            <person name="Ren Q."/>
            <person name="Ross R.L."/>
            <person name="Sato P.Y."/>
            <person name="Thomas P."/>
            <person name="Tinkham L.E."/>
            <person name="Zeruth G.T."/>
        </authorList>
    </citation>
    <scope>NUCLEOTIDE SEQUENCE [LARGE SCALE GENOMIC DNA]</scope>
    <source>
        <strain>DSM 25203 / XCL-2</strain>
    </source>
</reference>
<gene>
    <name evidence="1" type="primary">rpsI</name>
    <name type="ordered locus">Tcr_0462</name>
</gene>